<feature type="chain" id="PRO_1000071247" description="Glutamyl-tRNA reductase">
    <location>
        <begin position="1"/>
        <end position="432"/>
    </location>
</feature>
<feature type="active site" description="Nucleophile" evidence="1">
    <location>
        <position position="50"/>
    </location>
</feature>
<feature type="binding site" evidence="1">
    <location>
        <begin position="49"/>
        <end position="52"/>
    </location>
    <ligand>
        <name>substrate</name>
    </ligand>
</feature>
<feature type="binding site" evidence="1">
    <location>
        <position position="107"/>
    </location>
    <ligand>
        <name>substrate</name>
    </ligand>
</feature>
<feature type="binding site" evidence="1">
    <location>
        <begin position="112"/>
        <end position="114"/>
    </location>
    <ligand>
        <name>substrate</name>
    </ligand>
</feature>
<feature type="binding site" evidence="1">
    <location>
        <position position="118"/>
    </location>
    <ligand>
        <name>substrate</name>
    </ligand>
</feature>
<feature type="binding site" evidence="1">
    <location>
        <begin position="186"/>
        <end position="191"/>
    </location>
    <ligand>
        <name>NADP(+)</name>
        <dbReference type="ChEBI" id="CHEBI:58349"/>
    </ligand>
</feature>
<feature type="site" description="Important for activity" evidence="1">
    <location>
        <position position="97"/>
    </location>
</feature>
<name>HEM1_CAMJ8</name>
<sequence>MYYCISFTHKNTDIALREKLSFSNEAKKSEFLKIISTHENIEECLVISTCNRVEIVAFVKMACAEFIVKSLALLCDVDKDILLEKADIFEDSGAIHHLFSVASSLDSLVVGETQIAGQLKDAFAFAVKNNFCGVHLSRAVHSAFKCAAKVRNETQISKNPISVASVAVAKAKELADLAQKKAVVIGAGEMGELAAKHLIAAGAKVIILNRDLQKAKDLCERLGVLSEYDSLENLKKYLNQYEFFFSATNAPNAIITNSLIEELPYKRYFFDIAVPRDIDINENENISVFAVDDLENVVQKNLALREQEARMAYGIIGRETSEFFRYLNDLALMPIIKAIRLQAKEYADKQLEIALKKGYLKKSDKEEARKLIHQVFKAFLHTPTVNLKHLQGKMQSDTVINAMRYVFDLQNNLEGLNQYKCEFDMENNDEIY</sequence>
<comment type="function">
    <text evidence="1">Catalyzes the NADPH-dependent reduction of glutamyl-tRNA(Glu) to glutamate 1-semialdehyde (GSA).</text>
</comment>
<comment type="catalytic activity">
    <reaction evidence="1">
        <text>(S)-4-amino-5-oxopentanoate + tRNA(Glu) + NADP(+) = L-glutamyl-tRNA(Glu) + NADPH + H(+)</text>
        <dbReference type="Rhea" id="RHEA:12344"/>
        <dbReference type="Rhea" id="RHEA-COMP:9663"/>
        <dbReference type="Rhea" id="RHEA-COMP:9680"/>
        <dbReference type="ChEBI" id="CHEBI:15378"/>
        <dbReference type="ChEBI" id="CHEBI:57501"/>
        <dbReference type="ChEBI" id="CHEBI:57783"/>
        <dbReference type="ChEBI" id="CHEBI:58349"/>
        <dbReference type="ChEBI" id="CHEBI:78442"/>
        <dbReference type="ChEBI" id="CHEBI:78520"/>
        <dbReference type="EC" id="1.2.1.70"/>
    </reaction>
</comment>
<comment type="pathway">
    <text evidence="1">Porphyrin-containing compound metabolism; protoporphyrin-IX biosynthesis; 5-aminolevulinate from L-glutamyl-tRNA(Glu): step 1/2.</text>
</comment>
<comment type="subunit">
    <text evidence="1">Homodimer.</text>
</comment>
<comment type="domain">
    <text evidence="1">Possesses an unusual extended V-shaped dimeric structure with each monomer consisting of three distinct domains arranged along a curved 'spinal' alpha-helix. The N-terminal catalytic domain specifically recognizes the glutamate moiety of the substrate. The second domain is the NADPH-binding domain, and the third C-terminal domain is responsible for dimerization.</text>
</comment>
<comment type="miscellaneous">
    <text evidence="1">During catalysis, the active site Cys acts as a nucleophile attacking the alpha-carbonyl group of tRNA-bound glutamate with the formation of a thioester intermediate between enzyme and glutamate, and the concomitant release of tRNA(Glu). The thioester intermediate is finally reduced by direct hydride transfer from NADPH, to form the product GSA.</text>
</comment>
<comment type="similarity">
    <text evidence="1">Belongs to the glutamyl-tRNA reductase family.</text>
</comment>
<evidence type="ECO:0000255" key="1">
    <source>
        <dbReference type="HAMAP-Rule" id="MF_00087"/>
    </source>
</evidence>
<protein>
    <recommendedName>
        <fullName evidence="1">Glutamyl-tRNA reductase</fullName>
        <shortName evidence="1">GluTR</shortName>
        <ecNumber evidence="1">1.2.1.70</ecNumber>
    </recommendedName>
</protein>
<organism>
    <name type="scientific">Campylobacter jejuni subsp. jejuni serotype O:6 (strain 81116 / NCTC 11828)</name>
    <dbReference type="NCBI Taxonomy" id="407148"/>
    <lineage>
        <taxon>Bacteria</taxon>
        <taxon>Pseudomonadati</taxon>
        <taxon>Campylobacterota</taxon>
        <taxon>Epsilonproteobacteria</taxon>
        <taxon>Campylobacterales</taxon>
        <taxon>Campylobacteraceae</taxon>
        <taxon>Campylobacter</taxon>
    </lineage>
</organism>
<gene>
    <name evidence="1" type="primary">hemA</name>
    <name type="ordered locus">C8J_0503</name>
</gene>
<reference key="1">
    <citation type="journal article" date="2007" name="J. Bacteriol.">
        <title>The complete genome sequence of Campylobacter jejuni strain 81116 (NCTC11828).</title>
        <authorList>
            <person name="Pearson B.M."/>
            <person name="Gaskin D.J.H."/>
            <person name="Segers R.P.A.M."/>
            <person name="Wells J.M."/>
            <person name="Nuijten P.J.M."/>
            <person name="van Vliet A.H.M."/>
        </authorList>
    </citation>
    <scope>NUCLEOTIDE SEQUENCE [LARGE SCALE GENOMIC DNA]</scope>
    <source>
        <strain>81116 / NCTC 11828</strain>
    </source>
</reference>
<proteinExistence type="inferred from homology"/>
<accession>A8FKW5</accession>
<keyword id="KW-0521">NADP</keyword>
<keyword id="KW-0560">Oxidoreductase</keyword>
<keyword id="KW-0627">Porphyrin biosynthesis</keyword>
<dbReference type="EC" id="1.2.1.70" evidence="1"/>
<dbReference type="EMBL" id="CP000814">
    <property type="protein sequence ID" value="ABV52102.1"/>
    <property type="molecule type" value="Genomic_DNA"/>
</dbReference>
<dbReference type="RefSeq" id="WP_002866424.1">
    <property type="nucleotide sequence ID" value="NC_009839.1"/>
</dbReference>
<dbReference type="SMR" id="A8FKW5"/>
<dbReference type="KEGG" id="cju:C8J_0503"/>
<dbReference type="HOGENOM" id="CLU_035113_2_2_7"/>
<dbReference type="UniPathway" id="UPA00251">
    <property type="reaction ID" value="UER00316"/>
</dbReference>
<dbReference type="GO" id="GO:0008883">
    <property type="term" value="F:glutamyl-tRNA reductase activity"/>
    <property type="evidence" value="ECO:0007669"/>
    <property type="project" value="UniProtKB-UniRule"/>
</dbReference>
<dbReference type="GO" id="GO:0050661">
    <property type="term" value="F:NADP binding"/>
    <property type="evidence" value="ECO:0007669"/>
    <property type="project" value="InterPro"/>
</dbReference>
<dbReference type="GO" id="GO:0019353">
    <property type="term" value="P:protoporphyrinogen IX biosynthetic process from glutamate"/>
    <property type="evidence" value="ECO:0007669"/>
    <property type="project" value="TreeGrafter"/>
</dbReference>
<dbReference type="CDD" id="cd05213">
    <property type="entry name" value="NAD_bind_Glutamyl_tRNA_reduct"/>
    <property type="match status" value="1"/>
</dbReference>
<dbReference type="FunFam" id="3.30.460.30:FF:000001">
    <property type="entry name" value="Glutamyl-tRNA reductase"/>
    <property type="match status" value="1"/>
</dbReference>
<dbReference type="Gene3D" id="3.30.460.30">
    <property type="entry name" value="Glutamyl-tRNA reductase, N-terminal domain"/>
    <property type="match status" value="1"/>
</dbReference>
<dbReference type="Gene3D" id="3.40.50.720">
    <property type="entry name" value="NAD(P)-binding Rossmann-like Domain"/>
    <property type="match status" value="1"/>
</dbReference>
<dbReference type="HAMAP" id="MF_00087">
    <property type="entry name" value="Glu_tRNA_reductase"/>
    <property type="match status" value="1"/>
</dbReference>
<dbReference type="InterPro" id="IPR000343">
    <property type="entry name" value="4pyrrol_synth_GluRdtase"/>
</dbReference>
<dbReference type="InterPro" id="IPR015896">
    <property type="entry name" value="4pyrrol_synth_GluRdtase_dimer"/>
</dbReference>
<dbReference type="InterPro" id="IPR015895">
    <property type="entry name" value="4pyrrol_synth_GluRdtase_N"/>
</dbReference>
<dbReference type="InterPro" id="IPR018214">
    <property type="entry name" value="GluRdtase_CS"/>
</dbReference>
<dbReference type="InterPro" id="IPR036453">
    <property type="entry name" value="GluRdtase_dimer_dom_sf"/>
</dbReference>
<dbReference type="InterPro" id="IPR036343">
    <property type="entry name" value="GluRdtase_N_sf"/>
</dbReference>
<dbReference type="InterPro" id="IPR036291">
    <property type="entry name" value="NAD(P)-bd_dom_sf"/>
</dbReference>
<dbReference type="InterPro" id="IPR006151">
    <property type="entry name" value="Shikm_DH/Glu-tRNA_Rdtase"/>
</dbReference>
<dbReference type="NCBIfam" id="TIGR01035">
    <property type="entry name" value="hemA"/>
    <property type="match status" value="1"/>
</dbReference>
<dbReference type="PANTHER" id="PTHR43013">
    <property type="entry name" value="GLUTAMYL-TRNA REDUCTASE"/>
    <property type="match status" value="1"/>
</dbReference>
<dbReference type="PANTHER" id="PTHR43013:SF1">
    <property type="entry name" value="GLUTAMYL-TRNA REDUCTASE"/>
    <property type="match status" value="1"/>
</dbReference>
<dbReference type="Pfam" id="PF00745">
    <property type="entry name" value="GlutR_dimer"/>
    <property type="match status" value="1"/>
</dbReference>
<dbReference type="Pfam" id="PF05201">
    <property type="entry name" value="GlutR_N"/>
    <property type="match status" value="1"/>
</dbReference>
<dbReference type="Pfam" id="PF01488">
    <property type="entry name" value="Shikimate_DH"/>
    <property type="match status" value="1"/>
</dbReference>
<dbReference type="PIRSF" id="PIRSF000445">
    <property type="entry name" value="4pyrrol_synth_GluRdtase"/>
    <property type="match status" value="1"/>
</dbReference>
<dbReference type="SUPFAM" id="SSF69742">
    <property type="entry name" value="Glutamyl tRNA-reductase catalytic, N-terminal domain"/>
    <property type="match status" value="1"/>
</dbReference>
<dbReference type="SUPFAM" id="SSF69075">
    <property type="entry name" value="Glutamyl tRNA-reductase dimerization domain"/>
    <property type="match status" value="1"/>
</dbReference>
<dbReference type="SUPFAM" id="SSF51735">
    <property type="entry name" value="NAD(P)-binding Rossmann-fold domains"/>
    <property type="match status" value="1"/>
</dbReference>
<dbReference type="PROSITE" id="PS00747">
    <property type="entry name" value="GLUTR"/>
    <property type="match status" value="1"/>
</dbReference>